<dbReference type="EMBL" id="BX571658">
    <property type="protein sequence ID" value="CAE09652.1"/>
    <property type="molecule type" value="Genomic_DNA"/>
</dbReference>
<dbReference type="RefSeq" id="WP_011138452.1">
    <property type="nucleotide sequence ID" value="NC_005090.1"/>
</dbReference>
<dbReference type="SMR" id="Q7MA19"/>
<dbReference type="STRING" id="273121.WS0515"/>
<dbReference type="KEGG" id="wsu:WS0515"/>
<dbReference type="eggNOG" id="COG0224">
    <property type="taxonomic scope" value="Bacteria"/>
</dbReference>
<dbReference type="HOGENOM" id="CLU_050669_0_1_7"/>
<dbReference type="Proteomes" id="UP000000422">
    <property type="component" value="Chromosome"/>
</dbReference>
<dbReference type="GO" id="GO:0005886">
    <property type="term" value="C:plasma membrane"/>
    <property type="evidence" value="ECO:0007669"/>
    <property type="project" value="UniProtKB-SubCell"/>
</dbReference>
<dbReference type="GO" id="GO:0045259">
    <property type="term" value="C:proton-transporting ATP synthase complex"/>
    <property type="evidence" value="ECO:0007669"/>
    <property type="project" value="UniProtKB-KW"/>
</dbReference>
<dbReference type="GO" id="GO:0005524">
    <property type="term" value="F:ATP binding"/>
    <property type="evidence" value="ECO:0007669"/>
    <property type="project" value="UniProtKB-UniRule"/>
</dbReference>
<dbReference type="GO" id="GO:0046933">
    <property type="term" value="F:proton-transporting ATP synthase activity, rotational mechanism"/>
    <property type="evidence" value="ECO:0007669"/>
    <property type="project" value="UniProtKB-UniRule"/>
</dbReference>
<dbReference type="GO" id="GO:0042777">
    <property type="term" value="P:proton motive force-driven plasma membrane ATP synthesis"/>
    <property type="evidence" value="ECO:0007669"/>
    <property type="project" value="UniProtKB-UniRule"/>
</dbReference>
<dbReference type="CDD" id="cd12151">
    <property type="entry name" value="F1-ATPase_gamma"/>
    <property type="match status" value="1"/>
</dbReference>
<dbReference type="FunFam" id="1.10.287.80:FF:000007">
    <property type="entry name" value="ATP synthase gamma chain"/>
    <property type="match status" value="1"/>
</dbReference>
<dbReference type="FunFam" id="3.40.1380.10:FF:000006">
    <property type="entry name" value="ATP synthase gamma chain"/>
    <property type="match status" value="1"/>
</dbReference>
<dbReference type="Gene3D" id="3.40.1380.10">
    <property type="match status" value="1"/>
</dbReference>
<dbReference type="Gene3D" id="1.10.287.80">
    <property type="entry name" value="ATP synthase, gamma subunit, helix hairpin domain"/>
    <property type="match status" value="1"/>
</dbReference>
<dbReference type="HAMAP" id="MF_00815">
    <property type="entry name" value="ATP_synth_gamma_bact"/>
    <property type="match status" value="1"/>
</dbReference>
<dbReference type="InterPro" id="IPR035968">
    <property type="entry name" value="ATP_synth_F1_ATPase_gsu"/>
</dbReference>
<dbReference type="InterPro" id="IPR000131">
    <property type="entry name" value="ATP_synth_F1_gsu"/>
</dbReference>
<dbReference type="NCBIfam" id="TIGR01146">
    <property type="entry name" value="ATPsyn_F1gamma"/>
    <property type="match status" value="1"/>
</dbReference>
<dbReference type="PANTHER" id="PTHR11693">
    <property type="entry name" value="ATP SYNTHASE GAMMA CHAIN"/>
    <property type="match status" value="1"/>
</dbReference>
<dbReference type="PANTHER" id="PTHR11693:SF22">
    <property type="entry name" value="ATP SYNTHASE SUBUNIT GAMMA, MITOCHONDRIAL"/>
    <property type="match status" value="1"/>
</dbReference>
<dbReference type="Pfam" id="PF00231">
    <property type="entry name" value="ATP-synt"/>
    <property type="match status" value="1"/>
</dbReference>
<dbReference type="PRINTS" id="PR00126">
    <property type="entry name" value="ATPASEGAMMA"/>
</dbReference>
<dbReference type="SUPFAM" id="SSF52943">
    <property type="entry name" value="ATP synthase (F1-ATPase), gamma subunit"/>
    <property type="match status" value="1"/>
</dbReference>
<gene>
    <name evidence="1" type="primary">atpG</name>
    <name type="ordered locus">WS0515</name>
</gene>
<proteinExistence type="inferred from homology"/>
<name>ATPG_WOLSU</name>
<keyword id="KW-0066">ATP synthesis</keyword>
<keyword id="KW-0997">Cell inner membrane</keyword>
<keyword id="KW-1003">Cell membrane</keyword>
<keyword id="KW-0139">CF(1)</keyword>
<keyword id="KW-0375">Hydrogen ion transport</keyword>
<keyword id="KW-0406">Ion transport</keyword>
<keyword id="KW-0472">Membrane</keyword>
<keyword id="KW-1185">Reference proteome</keyword>
<keyword id="KW-0813">Transport</keyword>
<comment type="function">
    <text evidence="1">Produces ATP from ADP in the presence of a proton gradient across the membrane. The gamma chain is believed to be important in regulating ATPase activity and the flow of protons through the CF(0) complex.</text>
</comment>
<comment type="subunit">
    <text evidence="1">F-type ATPases have 2 components, CF(1) - the catalytic core - and CF(0) - the membrane proton channel. CF(1) has five subunits: alpha(3), beta(3), gamma(1), delta(1), epsilon(1). CF(0) has three main subunits: a, b and c.</text>
</comment>
<comment type="subcellular location">
    <subcellularLocation>
        <location evidence="1">Cell inner membrane</location>
        <topology evidence="1">Peripheral membrane protein</topology>
    </subcellularLocation>
</comment>
<comment type="similarity">
    <text evidence="1">Belongs to the ATPase gamma chain family.</text>
</comment>
<reference key="1">
    <citation type="journal article" date="2003" name="Proc. Natl. Acad. Sci. U.S.A.">
        <title>Complete genome sequence and analysis of Wolinella succinogenes.</title>
        <authorList>
            <person name="Baar C."/>
            <person name="Eppinger M."/>
            <person name="Raddatz G."/>
            <person name="Simon J."/>
            <person name="Lanz C."/>
            <person name="Klimmek O."/>
            <person name="Nandakumar R."/>
            <person name="Gross R."/>
            <person name="Rosinus A."/>
            <person name="Keller H."/>
            <person name="Jagtap P."/>
            <person name="Linke B."/>
            <person name="Meyer F."/>
            <person name="Lederer H."/>
            <person name="Schuster S.C."/>
        </authorList>
    </citation>
    <scope>NUCLEOTIDE SEQUENCE [LARGE SCALE GENOMIC DNA]</scope>
    <source>
        <strain>ATCC 29543 / DSM 1740 / CCUG 13145 / JCM 31913 / LMG 7466 / NCTC 11488 / FDC 602W</strain>
    </source>
</reference>
<feature type="chain" id="PRO_0000073419" description="ATP synthase gamma chain">
    <location>
        <begin position="1"/>
        <end position="298"/>
    </location>
</feature>
<sequence length="298" mass="33281">MGSNLKEIRKKITSVKNTQKTTKAMKLVSTSKLKKAEEMAKRSRVYAERITAVFQEIKAKIEQNGFSGLESPYFTAGEDREVKMVDIVFVTADKGLCGGFNSTTIKEVTRLMAEYKSQNVKVRLRAIGKKGISFFGFNEVELLDKVSDLSATPDYERAAEFVNKATTDFINGVTDKVILVHNGFKNMISQELKVQDLLPIKADAIEAKESLGMMEVEPSEQEREILDQLAKKYIEFNMYYALIDSLAAEHSARMQAMDAASNNAGELVKSLTIAYNKARQEAITTELVEINTGVESMK</sequence>
<organism>
    <name type="scientific">Wolinella succinogenes (strain ATCC 29543 / DSM 1740 / CCUG 13145 / JCM 31913 / LMG 7466 / NCTC 11488 / FDC 602W)</name>
    <name type="common">Vibrio succinogenes</name>
    <dbReference type="NCBI Taxonomy" id="273121"/>
    <lineage>
        <taxon>Bacteria</taxon>
        <taxon>Pseudomonadati</taxon>
        <taxon>Campylobacterota</taxon>
        <taxon>Epsilonproteobacteria</taxon>
        <taxon>Campylobacterales</taxon>
        <taxon>Helicobacteraceae</taxon>
        <taxon>Wolinella</taxon>
    </lineage>
</organism>
<protein>
    <recommendedName>
        <fullName evidence="1">ATP synthase gamma chain</fullName>
    </recommendedName>
    <alternativeName>
        <fullName evidence="1">ATP synthase F1 sector gamma subunit</fullName>
    </alternativeName>
    <alternativeName>
        <fullName evidence="1">F-ATPase gamma subunit</fullName>
    </alternativeName>
</protein>
<evidence type="ECO:0000255" key="1">
    <source>
        <dbReference type="HAMAP-Rule" id="MF_00815"/>
    </source>
</evidence>
<accession>Q7MA19</accession>